<comment type="function">
    <text evidence="1">Component of the Mediator complex, a coactivator involved in the regulated transcription of nearly all RNA polymerase II-dependent genes. Mediator functions as a bridge to convey information from gene-specific regulatory proteins to the basal RNA polymerase II transcription machinery. Mediator is recruited to promoters by direct interactions with regulatory proteins and serves as a scaffold for the assembly of a functional preinitiation complex with RNA polymerase II and the general transcription factors (By similarity).</text>
</comment>
<comment type="subunit">
    <text evidence="1">Component of the Mediator complex.</text>
</comment>
<comment type="subcellular location">
    <subcellularLocation>
        <location evidence="1">Nucleus</location>
    </subcellularLocation>
</comment>
<comment type="similarity">
    <text evidence="3">Belongs to the Mediator complex subunit 17 family.</text>
</comment>
<organism>
    <name type="scientific">Aspergillus fumigatus (strain ATCC MYA-4609 / CBS 101355 / FGSC A1100 / Af293)</name>
    <name type="common">Neosartorya fumigata</name>
    <dbReference type="NCBI Taxonomy" id="330879"/>
    <lineage>
        <taxon>Eukaryota</taxon>
        <taxon>Fungi</taxon>
        <taxon>Dikarya</taxon>
        <taxon>Ascomycota</taxon>
        <taxon>Pezizomycotina</taxon>
        <taxon>Eurotiomycetes</taxon>
        <taxon>Eurotiomycetidae</taxon>
        <taxon>Eurotiales</taxon>
        <taxon>Aspergillaceae</taxon>
        <taxon>Aspergillus</taxon>
        <taxon>Aspergillus subgen. Fumigati</taxon>
    </lineage>
</organism>
<accession>Q4W9B7</accession>
<protein>
    <recommendedName>
        <fullName>Mediator of RNA polymerase II transcription subunit 17</fullName>
    </recommendedName>
    <alternativeName>
        <fullName>Mediator complex subunit 17</fullName>
    </alternativeName>
</protein>
<sequence>MADDRFTLPLRPLIEKRDRPDPLPLEIAQINAQWGSFRDVSEESLRAKIEEEKSKEYTIEEEEGEGAGAELDTTERLDQLYKRRAEIIQFAMQAHMEAMFALDFVSMLLSKHTPRQAETSMSAYLKQVAPLGSLHSEIINPPPKSEAVVRDTKTVSRGWRLQSFNAAADKLLKSASRLENEVASETRYWHEVLAVKDKGWKLCRLPRQGQTLGVQYGFLEATPIFRDRGLAALRRSEDGTLILDKGLVPTKAKTVRVRVKDCGIITGCSKPYRSAAQDPDSIEGRILQARDTLYEEELFHELFREARIMGSQGVTTRQNLVQFPVSEEQEILLDLVDPDQEVYVDDEATKSEEHNVLADALAHLIRILLCYAHRQNLRRRTQPPPALSPKRRHIPEYQLLRPIMAYLQHSFHVRWLETFMKDVYGVLQSAGLSCSFTATPYSSVNLSNIDRSVPKVEGLIRQFLLPLESTFSADLLTPQSSFKVKSRTNLSVPPFGTQFEILLNLPHYPDVHPPHRIGLHDQAANIITHFIMLDIVAAIELQTSPALSISKTEAKSVSWEATYPHHGELLSVSIDGKQKKMKVILSRDELTIQTYDVLGLERYSRAAPETTPGLQTHTWKAGPTTAPSLMEYVAAVSQR</sequence>
<keyword id="KW-0010">Activator</keyword>
<keyword id="KW-0175">Coiled coil</keyword>
<keyword id="KW-0539">Nucleus</keyword>
<keyword id="KW-1185">Reference proteome</keyword>
<keyword id="KW-0804">Transcription</keyword>
<keyword id="KW-0805">Transcription regulation</keyword>
<dbReference type="EMBL" id="AAHF01000017">
    <property type="protein sequence ID" value="EAL84324.1"/>
    <property type="molecule type" value="Genomic_DNA"/>
</dbReference>
<dbReference type="RefSeq" id="XP_746362.1">
    <property type="nucleotide sequence ID" value="XM_741269.1"/>
</dbReference>
<dbReference type="SMR" id="Q4W9B7"/>
<dbReference type="FunCoup" id="Q4W9B7">
    <property type="interactions" value="140"/>
</dbReference>
<dbReference type="STRING" id="330879.Q4W9B7"/>
<dbReference type="EnsemblFungi" id="EAL84324">
    <property type="protein sequence ID" value="EAL84324"/>
    <property type="gene ID" value="AFUA_4G00950"/>
</dbReference>
<dbReference type="GeneID" id="3503712"/>
<dbReference type="KEGG" id="afm:AFUA_4G00950"/>
<dbReference type="VEuPathDB" id="FungiDB:Afu4g00950"/>
<dbReference type="eggNOG" id="ENOG502QS9H">
    <property type="taxonomic scope" value="Eukaryota"/>
</dbReference>
<dbReference type="HOGENOM" id="CLU_015164_1_0_1"/>
<dbReference type="InParanoid" id="Q4W9B7"/>
<dbReference type="OMA" id="AAETKYW"/>
<dbReference type="OrthoDB" id="5319830at2759"/>
<dbReference type="Proteomes" id="UP000002530">
    <property type="component" value="Chromosome 4"/>
</dbReference>
<dbReference type="GO" id="GO:0070847">
    <property type="term" value="C:core mediator complex"/>
    <property type="evidence" value="ECO:0000318"/>
    <property type="project" value="GO_Central"/>
</dbReference>
<dbReference type="GO" id="GO:0016592">
    <property type="term" value="C:mediator complex"/>
    <property type="evidence" value="ECO:0000318"/>
    <property type="project" value="GO_Central"/>
</dbReference>
<dbReference type="GO" id="GO:0003712">
    <property type="term" value="F:transcription coregulator activity"/>
    <property type="evidence" value="ECO:0000318"/>
    <property type="project" value="GO_Central"/>
</dbReference>
<dbReference type="GO" id="GO:0006357">
    <property type="term" value="P:regulation of transcription by RNA polymerase II"/>
    <property type="evidence" value="ECO:0000318"/>
    <property type="project" value="GO_Central"/>
</dbReference>
<dbReference type="Gene3D" id="6.10.250.2620">
    <property type="match status" value="1"/>
</dbReference>
<dbReference type="InterPro" id="IPR019313">
    <property type="entry name" value="Mediator_Med17"/>
</dbReference>
<dbReference type="PANTHER" id="PTHR13114">
    <property type="entry name" value="MEDIATOR OF RNA POLYMERASE II TRANSCRIPTION SUBUNIT 17"/>
    <property type="match status" value="1"/>
</dbReference>
<dbReference type="PANTHER" id="PTHR13114:SF7">
    <property type="entry name" value="MEDIATOR OF RNA POLYMERASE II TRANSCRIPTION SUBUNIT 17"/>
    <property type="match status" value="1"/>
</dbReference>
<dbReference type="Pfam" id="PF10156">
    <property type="entry name" value="Med17"/>
    <property type="match status" value="1"/>
</dbReference>
<gene>
    <name type="primary">srb4</name>
    <name type="synonym">med17</name>
    <name type="ORF">AFUA_4G00950</name>
</gene>
<name>MED17_ASPFU</name>
<reference key="1">
    <citation type="journal article" date="2005" name="Nature">
        <title>Genomic sequence of the pathogenic and allergenic filamentous fungus Aspergillus fumigatus.</title>
        <authorList>
            <person name="Nierman W.C."/>
            <person name="Pain A."/>
            <person name="Anderson M.J."/>
            <person name="Wortman J.R."/>
            <person name="Kim H.S."/>
            <person name="Arroyo J."/>
            <person name="Berriman M."/>
            <person name="Abe K."/>
            <person name="Archer D.B."/>
            <person name="Bermejo C."/>
            <person name="Bennett J.W."/>
            <person name="Bowyer P."/>
            <person name="Chen D."/>
            <person name="Collins M."/>
            <person name="Coulsen R."/>
            <person name="Davies R."/>
            <person name="Dyer P.S."/>
            <person name="Farman M.L."/>
            <person name="Fedorova N."/>
            <person name="Fedorova N.D."/>
            <person name="Feldblyum T.V."/>
            <person name="Fischer R."/>
            <person name="Fosker N."/>
            <person name="Fraser A."/>
            <person name="Garcia J.L."/>
            <person name="Garcia M.J."/>
            <person name="Goble A."/>
            <person name="Goldman G.H."/>
            <person name="Gomi K."/>
            <person name="Griffith-Jones S."/>
            <person name="Gwilliam R."/>
            <person name="Haas B.J."/>
            <person name="Haas H."/>
            <person name="Harris D.E."/>
            <person name="Horiuchi H."/>
            <person name="Huang J."/>
            <person name="Humphray S."/>
            <person name="Jimenez J."/>
            <person name="Keller N."/>
            <person name="Khouri H."/>
            <person name="Kitamoto K."/>
            <person name="Kobayashi T."/>
            <person name="Konzack S."/>
            <person name="Kulkarni R."/>
            <person name="Kumagai T."/>
            <person name="Lafton A."/>
            <person name="Latge J.-P."/>
            <person name="Li W."/>
            <person name="Lord A."/>
            <person name="Lu C."/>
            <person name="Majoros W.H."/>
            <person name="May G.S."/>
            <person name="Miller B.L."/>
            <person name="Mohamoud Y."/>
            <person name="Molina M."/>
            <person name="Monod M."/>
            <person name="Mouyna I."/>
            <person name="Mulligan S."/>
            <person name="Murphy L.D."/>
            <person name="O'Neil S."/>
            <person name="Paulsen I."/>
            <person name="Penalva M.A."/>
            <person name="Pertea M."/>
            <person name="Price C."/>
            <person name="Pritchard B.L."/>
            <person name="Quail M.A."/>
            <person name="Rabbinowitsch E."/>
            <person name="Rawlins N."/>
            <person name="Rajandream M.A."/>
            <person name="Reichard U."/>
            <person name="Renauld H."/>
            <person name="Robson G.D."/>
            <person name="Rodriguez de Cordoba S."/>
            <person name="Rodriguez-Pena J.M."/>
            <person name="Ronning C.M."/>
            <person name="Rutter S."/>
            <person name="Salzberg S.L."/>
            <person name="Sanchez M."/>
            <person name="Sanchez-Ferrero J.C."/>
            <person name="Saunders D."/>
            <person name="Seeger K."/>
            <person name="Squares R."/>
            <person name="Squares S."/>
            <person name="Takeuchi M."/>
            <person name="Tekaia F."/>
            <person name="Turner G."/>
            <person name="Vazquez de Aldana C.R."/>
            <person name="Weidman J."/>
            <person name="White O."/>
            <person name="Woodward J.R."/>
            <person name="Yu J.-H."/>
            <person name="Fraser C.M."/>
            <person name="Galagan J.E."/>
            <person name="Asai K."/>
            <person name="Machida M."/>
            <person name="Hall N."/>
            <person name="Barrell B.G."/>
            <person name="Denning D.W."/>
        </authorList>
    </citation>
    <scope>NUCLEOTIDE SEQUENCE [LARGE SCALE GENOMIC DNA]</scope>
    <source>
        <strain>ATCC MYA-4609 / CBS 101355 / FGSC A1100 / Af293</strain>
    </source>
</reference>
<feature type="chain" id="PRO_0000304710" description="Mediator of RNA polymerase II transcription subunit 17">
    <location>
        <begin position="1"/>
        <end position="639"/>
    </location>
</feature>
<feature type="coiled-coil region" evidence="2">
    <location>
        <begin position="160"/>
        <end position="187"/>
    </location>
</feature>
<evidence type="ECO:0000250" key="1"/>
<evidence type="ECO:0000255" key="2"/>
<evidence type="ECO:0000305" key="3"/>
<proteinExistence type="inferred from homology"/>